<organism>
    <name type="scientific">Chlorobaculum tepidum (strain ATCC 49652 / DSM 12025 / NBRC 103806 / TLS)</name>
    <name type="common">Chlorobium tepidum</name>
    <dbReference type="NCBI Taxonomy" id="194439"/>
    <lineage>
        <taxon>Bacteria</taxon>
        <taxon>Pseudomonadati</taxon>
        <taxon>Chlorobiota</taxon>
        <taxon>Chlorobiia</taxon>
        <taxon>Chlorobiales</taxon>
        <taxon>Chlorobiaceae</taxon>
        <taxon>Chlorobaculum</taxon>
    </lineage>
</organism>
<accession>P59599</accession>
<reference key="1">
    <citation type="journal article" date="2002" name="Proc. Natl. Acad. Sci. U.S.A.">
        <title>The complete genome sequence of Chlorobium tepidum TLS, a photosynthetic, anaerobic, green-sulfur bacterium.</title>
        <authorList>
            <person name="Eisen J.A."/>
            <person name="Nelson K.E."/>
            <person name="Paulsen I.T."/>
            <person name="Heidelberg J.F."/>
            <person name="Wu M."/>
            <person name="Dodson R.J."/>
            <person name="DeBoy R.T."/>
            <person name="Gwinn M.L."/>
            <person name="Nelson W.C."/>
            <person name="Haft D.H."/>
            <person name="Hickey E.K."/>
            <person name="Peterson J.D."/>
            <person name="Durkin A.S."/>
            <person name="Kolonay J.F."/>
            <person name="Yang F."/>
            <person name="Holt I.E."/>
            <person name="Umayam L.A."/>
            <person name="Mason T.M."/>
            <person name="Brenner M."/>
            <person name="Shea T.P."/>
            <person name="Parksey D.S."/>
            <person name="Nierman W.C."/>
            <person name="Feldblyum T.V."/>
            <person name="Hansen C.L."/>
            <person name="Craven M.B."/>
            <person name="Radune D."/>
            <person name="Vamathevan J.J."/>
            <person name="Khouri H.M."/>
            <person name="White O."/>
            <person name="Gruber T.M."/>
            <person name="Ketchum K.A."/>
            <person name="Venter J.C."/>
            <person name="Tettelin H."/>
            <person name="Bryant D.A."/>
            <person name="Fraser C.M."/>
        </authorList>
    </citation>
    <scope>NUCLEOTIDE SEQUENCE [LARGE SCALE GENOMIC DNA]</scope>
    <source>
        <strain>ATCC 49652 / DSM 12025 / NBRC 103806 / TLS</strain>
    </source>
</reference>
<evidence type="ECO:0000255" key="1">
    <source>
        <dbReference type="PROSITE-ProRule" id="PRU00532"/>
    </source>
</evidence>
<evidence type="ECO:0000305" key="2"/>
<protein>
    <recommendedName>
        <fullName>Uncharacterized N-acetyltransferase CT2212</fullName>
        <ecNumber>2.3.1.-</ecNumber>
    </recommendedName>
</protein>
<sequence>MPAADTCVRNARLADASAISRITEGYAGEGIMLKRSVENIIEHIRDFFVADYKGQVIGCCAIAFYTVKLAEIRSLAVLEEFRNKGIGRLLVEKAEAVLSEEGVNEVFVLTLNSGFFKRMGYKEIEKEYFPQKIWRDCTNCPKRMACDEIAMVKTL</sequence>
<name>Y2212_CHLTE</name>
<dbReference type="EC" id="2.3.1.-"/>
<dbReference type="EMBL" id="AE006470">
    <property type="protein sequence ID" value="AAM73428.1"/>
    <property type="molecule type" value="Genomic_DNA"/>
</dbReference>
<dbReference type="RefSeq" id="NP_663086.1">
    <property type="nucleotide sequence ID" value="NC_002932.3"/>
</dbReference>
<dbReference type="RefSeq" id="WP_010933865.1">
    <property type="nucleotide sequence ID" value="NC_002932.3"/>
</dbReference>
<dbReference type="SMR" id="P59599"/>
<dbReference type="STRING" id="194439.CT2212"/>
<dbReference type="EnsemblBacteria" id="AAM73428">
    <property type="protein sequence ID" value="AAM73428"/>
    <property type="gene ID" value="CT2212"/>
</dbReference>
<dbReference type="KEGG" id="cte:CT2212"/>
<dbReference type="PATRIC" id="fig|194439.7.peg.2008"/>
<dbReference type="eggNOG" id="COG1246">
    <property type="taxonomic scope" value="Bacteria"/>
</dbReference>
<dbReference type="HOGENOM" id="CLU_119519_0_0_10"/>
<dbReference type="OrthoDB" id="5419426at2"/>
<dbReference type="Proteomes" id="UP000001007">
    <property type="component" value="Chromosome"/>
</dbReference>
<dbReference type="GO" id="GO:0005737">
    <property type="term" value="C:cytoplasm"/>
    <property type="evidence" value="ECO:0007669"/>
    <property type="project" value="InterPro"/>
</dbReference>
<dbReference type="GO" id="GO:0004042">
    <property type="term" value="F:L-glutamate N-acetyltransferase activity"/>
    <property type="evidence" value="ECO:0007669"/>
    <property type="project" value="InterPro"/>
</dbReference>
<dbReference type="GO" id="GO:0006526">
    <property type="term" value="P:L-arginine biosynthetic process"/>
    <property type="evidence" value="ECO:0007669"/>
    <property type="project" value="InterPro"/>
</dbReference>
<dbReference type="CDD" id="cd04301">
    <property type="entry name" value="NAT_SF"/>
    <property type="match status" value="1"/>
</dbReference>
<dbReference type="Gene3D" id="3.40.630.30">
    <property type="match status" value="1"/>
</dbReference>
<dbReference type="InterPro" id="IPR016181">
    <property type="entry name" value="Acyl_CoA_acyltransferase"/>
</dbReference>
<dbReference type="InterPro" id="IPR000182">
    <property type="entry name" value="GNAT_dom"/>
</dbReference>
<dbReference type="InterPro" id="IPR010167">
    <property type="entry name" value="NH2A_AcTrfase"/>
</dbReference>
<dbReference type="NCBIfam" id="NF005840">
    <property type="entry name" value="PRK07757.1"/>
    <property type="match status" value="1"/>
</dbReference>
<dbReference type="PANTHER" id="PTHR30602">
    <property type="entry name" value="AMINO-ACID ACETYLTRANSFERASE"/>
    <property type="match status" value="1"/>
</dbReference>
<dbReference type="PANTHER" id="PTHR30602:SF12">
    <property type="entry name" value="AMINO-ACID ACETYLTRANSFERASE NAGS1, CHLOROPLASTIC-RELATED"/>
    <property type="match status" value="1"/>
</dbReference>
<dbReference type="Pfam" id="PF13508">
    <property type="entry name" value="Acetyltransf_7"/>
    <property type="match status" value="1"/>
</dbReference>
<dbReference type="SUPFAM" id="SSF55729">
    <property type="entry name" value="Acyl-CoA N-acyltransferases (Nat)"/>
    <property type="match status" value="1"/>
</dbReference>
<dbReference type="PROSITE" id="PS51186">
    <property type="entry name" value="GNAT"/>
    <property type="match status" value="1"/>
</dbReference>
<keyword id="KW-0012">Acyltransferase</keyword>
<keyword id="KW-1185">Reference proteome</keyword>
<keyword id="KW-0808">Transferase</keyword>
<gene>
    <name type="ordered locus">CT2212</name>
</gene>
<proteinExistence type="inferred from homology"/>
<comment type="similarity">
    <text evidence="2">Belongs to the acetyltransferase family.</text>
</comment>
<feature type="chain" id="PRO_0000074627" description="Uncharacterized N-acetyltransferase CT2212">
    <location>
        <begin position="1"/>
        <end position="155"/>
    </location>
</feature>
<feature type="domain" description="N-acetyltransferase" evidence="1">
    <location>
        <begin position="6"/>
        <end position="155"/>
    </location>
</feature>